<gene>
    <name type="primary">lsrD</name>
    <name type="ordered locus">Z2190</name>
    <name type="ordered locus">ECs2122</name>
</gene>
<evidence type="ECO:0000250" key="1"/>
<evidence type="ECO:0000255" key="2"/>
<evidence type="ECO:0000305" key="3"/>
<organism>
    <name type="scientific">Escherichia coli O157:H7</name>
    <dbReference type="NCBI Taxonomy" id="83334"/>
    <lineage>
        <taxon>Bacteria</taxon>
        <taxon>Pseudomonadati</taxon>
        <taxon>Pseudomonadota</taxon>
        <taxon>Gammaproteobacteria</taxon>
        <taxon>Enterobacterales</taxon>
        <taxon>Enterobacteriaceae</taxon>
        <taxon>Escherichia</taxon>
    </lineage>
</organism>
<keyword id="KW-0997">Cell inner membrane</keyword>
<keyword id="KW-1003">Cell membrane</keyword>
<keyword id="KW-0472">Membrane</keyword>
<keyword id="KW-1185">Reference proteome</keyword>
<keyword id="KW-0812">Transmembrane</keyword>
<keyword id="KW-1133">Transmembrane helix</keyword>
<keyword id="KW-0813">Transport</keyword>
<reference key="1">
    <citation type="journal article" date="2001" name="Nature">
        <title>Genome sequence of enterohaemorrhagic Escherichia coli O157:H7.</title>
        <authorList>
            <person name="Perna N.T."/>
            <person name="Plunkett G. III"/>
            <person name="Burland V."/>
            <person name="Mau B."/>
            <person name="Glasner J.D."/>
            <person name="Rose D.J."/>
            <person name="Mayhew G.F."/>
            <person name="Evans P.S."/>
            <person name="Gregor J."/>
            <person name="Kirkpatrick H.A."/>
            <person name="Posfai G."/>
            <person name="Hackett J."/>
            <person name="Klink S."/>
            <person name="Boutin A."/>
            <person name="Shao Y."/>
            <person name="Miller L."/>
            <person name="Grotbeck E.J."/>
            <person name="Davis N.W."/>
            <person name="Lim A."/>
            <person name="Dimalanta E.T."/>
            <person name="Potamousis K."/>
            <person name="Apodaca J."/>
            <person name="Anantharaman T.S."/>
            <person name="Lin J."/>
            <person name="Yen G."/>
            <person name="Schwartz D.C."/>
            <person name="Welch R.A."/>
            <person name="Blattner F.R."/>
        </authorList>
    </citation>
    <scope>NUCLEOTIDE SEQUENCE [LARGE SCALE GENOMIC DNA]</scope>
    <source>
        <strain>O157:H7 / EDL933 / ATCC 700927 / EHEC</strain>
    </source>
</reference>
<reference key="2">
    <citation type="journal article" date="2001" name="DNA Res.">
        <title>Complete genome sequence of enterohemorrhagic Escherichia coli O157:H7 and genomic comparison with a laboratory strain K-12.</title>
        <authorList>
            <person name="Hayashi T."/>
            <person name="Makino K."/>
            <person name="Ohnishi M."/>
            <person name="Kurokawa K."/>
            <person name="Ishii K."/>
            <person name="Yokoyama K."/>
            <person name="Han C.-G."/>
            <person name="Ohtsubo E."/>
            <person name="Nakayama K."/>
            <person name="Murata T."/>
            <person name="Tanaka M."/>
            <person name="Tobe T."/>
            <person name="Iida T."/>
            <person name="Takami H."/>
            <person name="Honda T."/>
            <person name="Sasakawa C."/>
            <person name="Ogasawara N."/>
            <person name="Yasunaga T."/>
            <person name="Kuhara S."/>
            <person name="Shiba T."/>
            <person name="Hattori M."/>
            <person name="Shinagawa H."/>
        </authorList>
    </citation>
    <scope>NUCLEOTIDE SEQUENCE [LARGE SCALE GENOMIC DNA]</scope>
    <source>
        <strain>O157:H7 / Sakai / RIMD 0509952 / EHEC</strain>
    </source>
</reference>
<sequence>MRIRYGWELALAALLVIEIVSFGAINPRMLDLNMLLFSTSDFICIGIVALPLTMVIVSGGIDISFGSTIGLCAIALGVLFQSGVPMPLAILLTLLLGALCGLINAGLIIYTKVNPLVITLGTLYLFAGSALLLSGMAGATGYEGIGGFPMAFTDFANLDVLGLPVPLIIFLICLLVFWLWLHKTHAGRNVFLIGQSPRVALYSAIPVNRTLCALYAMTGLASAVAAVLLVSYFGSARSDLGASFLMPAITAVVLGGANIYGGSGAIIGTAIAVLLVGYLQQGLQMAGVPNQVSSALSGALLIVVVVGRSVSLHRQQIKEWLARRANNPLP</sequence>
<accession>Q8X504</accession>
<accession>Q7ADZ5</accession>
<dbReference type="EMBL" id="AE005174">
    <property type="protein sequence ID" value="AAG56251.1"/>
    <property type="molecule type" value="Genomic_DNA"/>
</dbReference>
<dbReference type="EMBL" id="BA000007">
    <property type="protein sequence ID" value="BAB35545.1"/>
    <property type="molecule type" value="Genomic_DNA"/>
</dbReference>
<dbReference type="PIR" id="B90894">
    <property type="entry name" value="B90894"/>
</dbReference>
<dbReference type="PIR" id="G85723">
    <property type="entry name" value="G85723"/>
</dbReference>
<dbReference type="RefSeq" id="NP_310149.1">
    <property type="nucleotide sequence ID" value="NC_002695.1"/>
</dbReference>
<dbReference type="RefSeq" id="WP_001222737.1">
    <property type="nucleotide sequence ID" value="NZ_VOAI01000024.1"/>
</dbReference>
<dbReference type="STRING" id="155864.Z2190"/>
<dbReference type="GeneID" id="917327"/>
<dbReference type="KEGG" id="ece:Z2190"/>
<dbReference type="KEGG" id="ecs:ECs_2122"/>
<dbReference type="PATRIC" id="fig|386585.9.peg.2228"/>
<dbReference type="eggNOG" id="COG1172">
    <property type="taxonomic scope" value="Bacteria"/>
</dbReference>
<dbReference type="HOGENOM" id="CLU_028880_0_0_6"/>
<dbReference type="OMA" id="NTVVFQF"/>
<dbReference type="Proteomes" id="UP000000558">
    <property type="component" value="Chromosome"/>
</dbReference>
<dbReference type="Proteomes" id="UP000002519">
    <property type="component" value="Chromosome"/>
</dbReference>
<dbReference type="GO" id="GO:0005886">
    <property type="term" value="C:plasma membrane"/>
    <property type="evidence" value="ECO:0007669"/>
    <property type="project" value="UniProtKB-SubCell"/>
</dbReference>
<dbReference type="GO" id="GO:0022857">
    <property type="term" value="F:transmembrane transporter activity"/>
    <property type="evidence" value="ECO:0007669"/>
    <property type="project" value="InterPro"/>
</dbReference>
<dbReference type="CDD" id="cd06579">
    <property type="entry name" value="TM_PBP1_transp_AraH_like"/>
    <property type="match status" value="1"/>
</dbReference>
<dbReference type="InterPro" id="IPR001851">
    <property type="entry name" value="ABC_transp_permease"/>
</dbReference>
<dbReference type="NCBIfam" id="NF011612">
    <property type="entry name" value="PRK15038.1"/>
    <property type="match status" value="1"/>
</dbReference>
<dbReference type="PANTHER" id="PTHR32196">
    <property type="entry name" value="ABC TRANSPORTER PERMEASE PROTEIN YPHD-RELATED-RELATED"/>
    <property type="match status" value="1"/>
</dbReference>
<dbReference type="PANTHER" id="PTHR32196:SF71">
    <property type="entry name" value="AUTOINDUCER 2 IMPORT SYSTEM PERMEASE PROTEIN LSRD"/>
    <property type="match status" value="1"/>
</dbReference>
<dbReference type="Pfam" id="PF02653">
    <property type="entry name" value="BPD_transp_2"/>
    <property type="match status" value="1"/>
</dbReference>
<feature type="chain" id="PRO_0000351367" description="Autoinducer 2 import system permease protein LsrD">
    <location>
        <begin position="1"/>
        <end position="330"/>
    </location>
</feature>
<feature type="topological domain" description="Cytoplasmic" evidence="2">
    <location>
        <begin position="1"/>
        <end position="4"/>
    </location>
</feature>
<feature type="transmembrane region" description="Helical" evidence="2">
    <location>
        <begin position="5"/>
        <end position="25"/>
    </location>
</feature>
<feature type="topological domain" description="Periplasmic" evidence="2">
    <location>
        <begin position="26"/>
        <end position="42"/>
    </location>
</feature>
<feature type="transmembrane region" description="Helical" evidence="2">
    <location>
        <begin position="43"/>
        <end position="63"/>
    </location>
</feature>
<feature type="topological domain" description="Cytoplasmic" evidence="2">
    <location>
        <begin position="64"/>
        <end position="67"/>
    </location>
</feature>
<feature type="transmembrane region" description="Helical" evidence="2">
    <location>
        <begin position="68"/>
        <end position="88"/>
    </location>
</feature>
<feature type="transmembrane region" description="Helical" evidence="2">
    <location>
        <begin position="89"/>
        <end position="109"/>
    </location>
</feature>
<feature type="topological domain" description="Cytoplasmic" evidence="2">
    <location>
        <begin position="110"/>
        <end position="115"/>
    </location>
</feature>
<feature type="transmembrane region" description="Helical" evidence="2">
    <location>
        <begin position="116"/>
        <end position="136"/>
    </location>
</feature>
<feature type="topological domain" description="Periplasmic" evidence="2">
    <location>
        <begin position="137"/>
        <end position="159"/>
    </location>
</feature>
<feature type="transmembrane region" description="Helical" evidence="2">
    <location>
        <begin position="160"/>
        <end position="180"/>
    </location>
</feature>
<feature type="topological domain" description="Cytoplasmic" evidence="2">
    <location>
        <begin position="181"/>
        <end position="209"/>
    </location>
</feature>
<feature type="transmembrane region" description="Helical" evidence="2">
    <location>
        <begin position="210"/>
        <end position="230"/>
    </location>
</feature>
<feature type="topological domain" description="Periplasmic" evidence="2">
    <location>
        <begin position="231"/>
        <end position="237"/>
    </location>
</feature>
<feature type="transmembrane region" description="Helical" evidence="2">
    <location>
        <begin position="238"/>
        <end position="258"/>
    </location>
</feature>
<feature type="transmembrane region" description="Helical" evidence="2">
    <location>
        <begin position="259"/>
        <end position="279"/>
    </location>
</feature>
<feature type="topological domain" description="Periplasmic" evidence="2">
    <location>
        <begin position="280"/>
        <end position="285"/>
    </location>
</feature>
<feature type="transmembrane region" description="Helical" evidence="2">
    <location>
        <begin position="286"/>
        <end position="306"/>
    </location>
</feature>
<feature type="topological domain" description="Cytoplasmic" evidence="2">
    <location>
        <begin position="307"/>
        <end position="330"/>
    </location>
</feature>
<proteinExistence type="inferred from homology"/>
<comment type="function">
    <text evidence="1">Part of the ABC transporter complex LsrABCD involved in autoinducer 2 (AI-2) import. Probably responsible for the translocation of the substrate across the membrane (By similarity).</text>
</comment>
<comment type="subunit">
    <text evidence="1">The complex is composed of two ATP-binding proteins (LsrA), two transmembrane proteins (LsrC and LsrD) and a solute-binding protein (LsrB).</text>
</comment>
<comment type="subcellular location">
    <subcellularLocation>
        <location evidence="1">Cell inner membrane</location>
        <topology evidence="1">Multi-pass membrane protein</topology>
    </subcellularLocation>
</comment>
<comment type="similarity">
    <text evidence="3">Belongs to the binding-protein-dependent transport system permease family. AraH/RbsC subfamily.</text>
</comment>
<name>LSRD_ECO57</name>
<protein>
    <recommendedName>
        <fullName>Autoinducer 2 import system permease protein LsrD</fullName>
        <shortName>AI-2 import system permease protein LsrD</shortName>
    </recommendedName>
</protein>